<dbReference type="EMBL" id="LT708304">
    <property type="protein sequence ID" value="SIT99546.1"/>
    <property type="molecule type" value="Genomic_DNA"/>
</dbReference>
<dbReference type="EMBL" id="AJ005699">
    <property type="protein sequence ID" value="CAA06684.1"/>
    <property type="molecule type" value="Genomic_DNA"/>
</dbReference>
<dbReference type="RefSeq" id="NP_854605.1">
    <property type="nucleotide sequence ID" value="NC_002945.3"/>
</dbReference>
<dbReference type="SMR" id="O69443"/>
<dbReference type="KEGG" id="mbo:BQ2027_MB0948C"/>
<dbReference type="PATRIC" id="fig|233413.5.peg.1033"/>
<dbReference type="Proteomes" id="UP000001419">
    <property type="component" value="Chromosome"/>
</dbReference>
<dbReference type="GO" id="GO:0005886">
    <property type="term" value="C:plasma membrane"/>
    <property type="evidence" value="ECO:0007669"/>
    <property type="project" value="UniProtKB-SubCell"/>
</dbReference>
<dbReference type="GO" id="GO:0015086">
    <property type="term" value="F:cadmium ion transmembrane transporter activity"/>
    <property type="evidence" value="ECO:0007669"/>
    <property type="project" value="TreeGrafter"/>
</dbReference>
<dbReference type="GO" id="GO:0005384">
    <property type="term" value="F:manganese ion transmembrane transporter activity"/>
    <property type="evidence" value="ECO:0007669"/>
    <property type="project" value="TreeGrafter"/>
</dbReference>
<dbReference type="GO" id="GO:0046872">
    <property type="term" value="F:metal ion binding"/>
    <property type="evidence" value="ECO:0007669"/>
    <property type="project" value="UniProtKB-UniRule"/>
</dbReference>
<dbReference type="GO" id="GO:0016491">
    <property type="term" value="F:oxidoreductase activity"/>
    <property type="evidence" value="ECO:0007669"/>
    <property type="project" value="InterPro"/>
</dbReference>
<dbReference type="GO" id="GO:0015293">
    <property type="term" value="F:symporter activity"/>
    <property type="evidence" value="ECO:0007669"/>
    <property type="project" value="UniProtKB-UniRule"/>
</dbReference>
<dbReference type="GO" id="GO:0034755">
    <property type="term" value="P:iron ion transmembrane transport"/>
    <property type="evidence" value="ECO:0007669"/>
    <property type="project" value="TreeGrafter"/>
</dbReference>
<dbReference type="Gene3D" id="3.40.50.360">
    <property type="match status" value="1"/>
</dbReference>
<dbReference type="HAMAP" id="MF_00221">
    <property type="entry name" value="NRAMP"/>
    <property type="match status" value="1"/>
</dbReference>
<dbReference type="InterPro" id="IPR029039">
    <property type="entry name" value="Flavoprotein-like_sf"/>
</dbReference>
<dbReference type="InterPro" id="IPR005025">
    <property type="entry name" value="FMN_Rdtase-like_dom"/>
</dbReference>
<dbReference type="InterPro" id="IPR001046">
    <property type="entry name" value="NRAMP_fam"/>
</dbReference>
<dbReference type="NCBIfam" id="TIGR01197">
    <property type="entry name" value="nramp"/>
    <property type="match status" value="1"/>
</dbReference>
<dbReference type="NCBIfam" id="NF037982">
    <property type="entry name" value="Nramp_1"/>
    <property type="match status" value="1"/>
</dbReference>
<dbReference type="NCBIfam" id="NF001923">
    <property type="entry name" value="PRK00701.1"/>
    <property type="match status" value="1"/>
</dbReference>
<dbReference type="PANTHER" id="PTHR11706:SF33">
    <property type="entry name" value="NATURAL RESISTANCE-ASSOCIATED MACROPHAGE PROTEIN 2"/>
    <property type="match status" value="1"/>
</dbReference>
<dbReference type="PANTHER" id="PTHR11706">
    <property type="entry name" value="SOLUTE CARRIER PROTEIN FAMILY 11 MEMBER"/>
    <property type="match status" value="1"/>
</dbReference>
<dbReference type="Pfam" id="PF03358">
    <property type="entry name" value="FMN_red"/>
    <property type="match status" value="1"/>
</dbReference>
<dbReference type="Pfam" id="PF01566">
    <property type="entry name" value="Nramp"/>
    <property type="match status" value="1"/>
</dbReference>
<dbReference type="PRINTS" id="PR00447">
    <property type="entry name" value="NATRESASSCMP"/>
</dbReference>
<dbReference type="SUPFAM" id="SSF52218">
    <property type="entry name" value="Flavoproteins"/>
    <property type="match status" value="1"/>
</dbReference>
<reference key="1">
    <citation type="journal article" date="2003" name="Proc. Natl. Acad. Sci. U.S.A.">
        <title>The complete genome sequence of Mycobacterium bovis.</title>
        <authorList>
            <person name="Garnier T."/>
            <person name="Eiglmeier K."/>
            <person name="Camus J.-C."/>
            <person name="Medina N."/>
            <person name="Mansoor H."/>
            <person name="Pryor M."/>
            <person name="Duthoy S."/>
            <person name="Grondin S."/>
            <person name="Lacroix C."/>
            <person name="Monsempe C."/>
            <person name="Simon S."/>
            <person name="Harris B."/>
            <person name="Atkin R."/>
            <person name="Doggett J."/>
            <person name="Mayes R."/>
            <person name="Keating L."/>
            <person name="Wheeler P.R."/>
            <person name="Parkhill J."/>
            <person name="Barrell B.G."/>
            <person name="Cole S.T."/>
            <person name="Gordon S.V."/>
            <person name="Hewinson R.G."/>
        </authorList>
    </citation>
    <scope>NUCLEOTIDE SEQUENCE [LARGE SCALE GENOMIC DNA]</scope>
    <source>
        <strain>ATCC BAA-935 / AF2122/97</strain>
    </source>
</reference>
<reference key="2">
    <citation type="journal article" date="2017" name="Genome Announc.">
        <title>Updated reference genome sequence and annotation of Mycobacterium bovis AF2122/97.</title>
        <authorList>
            <person name="Malone K.M."/>
            <person name="Farrell D."/>
            <person name="Stuber T.P."/>
            <person name="Schubert O.T."/>
            <person name="Aebersold R."/>
            <person name="Robbe-Austerman S."/>
            <person name="Gordon S.V."/>
        </authorList>
    </citation>
    <scope>NUCLEOTIDE SEQUENCE [LARGE SCALE GENOMIC DNA]</scope>
    <scope>GENOME REANNOTATION</scope>
    <source>
        <strain>ATCC BAA-935 / AF2122/97</strain>
    </source>
</reference>
<reference key="3">
    <citation type="journal article" date="1998" name="Mol. Microbiol.">
        <title>Metal ion homeostasis and intracellular parasitism.</title>
        <authorList>
            <person name="Agranoff D.D."/>
            <person name="Krishna S."/>
        </authorList>
    </citation>
    <scope>NUCLEOTIDE SEQUENCE [GENOMIC DNA] OF 264-678</scope>
    <source>
        <strain>BCG</strain>
    </source>
</reference>
<feature type="chain" id="PRO_0000212625" description="Divalent metal cation transporter MntH">
    <location>
        <begin position="1"/>
        <end position="684"/>
    </location>
</feature>
<feature type="transmembrane region" description="Helical" evidence="2">
    <location>
        <begin position="283"/>
        <end position="303"/>
    </location>
</feature>
<feature type="transmembrane region" description="Helical" evidence="2">
    <location>
        <begin position="318"/>
        <end position="340"/>
    </location>
</feature>
<feature type="transmembrane region" description="Helical" evidence="2">
    <location>
        <begin position="365"/>
        <end position="387"/>
    </location>
</feature>
<feature type="transmembrane region" description="Helical" evidence="2">
    <location>
        <begin position="391"/>
        <end position="413"/>
    </location>
</feature>
<feature type="transmembrane region" description="Helical" evidence="2">
    <location>
        <begin position="427"/>
        <end position="446"/>
    </location>
</feature>
<feature type="transmembrane region" description="Helical" evidence="2">
    <location>
        <begin position="467"/>
        <end position="489"/>
    </location>
</feature>
<feature type="transmembrane region" description="Helical" evidence="2">
    <location>
        <begin position="514"/>
        <end position="534"/>
    </location>
</feature>
<feature type="transmembrane region" description="Helical" evidence="2">
    <location>
        <begin position="555"/>
        <end position="577"/>
    </location>
</feature>
<feature type="transmembrane region" description="Helical" evidence="2">
    <location>
        <begin position="597"/>
        <end position="616"/>
    </location>
</feature>
<feature type="transmembrane region" description="Helical" evidence="2">
    <location>
        <begin position="621"/>
        <end position="643"/>
    </location>
</feature>
<feature type="transmembrane region" description="Helical" evidence="2">
    <location>
        <begin position="656"/>
        <end position="678"/>
    </location>
</feature>
<feature type="region of interest" description="Disordered" evidence="3">
    <location>
        <begin position="223"/>
        <end position="250"/>
    </location>
</feature>
<comment type="function">
    <text evidence="1">H(+)-stimulated, divalent metal cation uptake system.</text>
</comment>
<comment type="subcellular location">
    <subcellularLocation>
        <location evidence="1">Cell membrane</location>
        <topology evidence="1">Multi-pass membrane protein</topology>
    </subcellularLocation>
</comment>
<comment type="similarity">
    <text evidence="4">In the C-terminal section; belongs to the NRAMP family.</text>
</comment>
<gene>
    <name type="primary">mntH</name>
    <name type="ordered locus">BQ2027_MB0948C</name>
</gene>
<keyword id="KW-1003">Cell membrane</keyword>
<keyword id="KW-0406">Ion transport</keyword>
<keyword id="KW-0472">Membrane</keyword>
<keyword id="KW-1185">Reference proteome</keyword>
<keyword id="KW-0769">Symport</keyword>
<keyword id="KW-0812">Transmembrane</keyword>
<keyword id="KW-1133">Transmembrane helix</keyword>
<keyword id="KW-0813">Transport</keyword>
<protein>
    <recommendedName>
        <fullName>Divalent metal cation transporter MntH</fullName>
    </recommendedName>
    <alternativeName>
        <fullName>BRAMP</fullName>
    </alternativeName>
</protein>
<name>MNTH_MYCBO</name>
<sequence>MTTTSDQNAAAPPRFDGLRALFINATLKRSPELSHTDGLIERSSGIMREHGVQVDTLRAVDHDIATGVWPDMTEHGWATDEWPALYRRVLDAHILVLCGPIWLGDNSSVMKRVIERLYACSSLLNEDGQYAYYGRAGGCLITGNEDGVKHCAMNVLYSLQHLGYTIPPQADAGWIGEAGPGPSYLDPGSGGPENDFTNRNTTFMTFNLMHIAQMLRAPAASRPTAINAPSGTPAAGRTSPTPTTDSQRRSRVARWLVAGEFRLLSHLCSRGSKVGELAQDTRTSLKTSWYLLGPAFVAAIAYVDPGNVAANVSSGAQFGYLLLWVIVAANVMAALVQYLSAKLGLVTGRSLPEAIGKRMGRPARLAYWAQAEIVAMATDVAEVIGGAIALRIMFNLPLPIGGIITGVVSLLLLTIQDRRGQRLFERVITALLLVIAIGFTASFFVVTPPPNAVLGGLAPRFQGTESVLLAAAIMGATVMPHAVYLHSGLARDRHGHPDPGPQRRRLLRVTRWDVGLAMLIAGGVNAAMLLVAALNMRGRGDTASIEGAYHAVHDTLGATIAVLFAVGLLASGLASSSVGAYAGAMIMQGLLHWSVPMLVRRLITLGPALAILTLGFDPTRTLVLSQVVLSFGIPFAVLPLVKLTGSPAVMGGDTNHRATTWVGWVVAVMVSLLNVMLIYLTVTG</sequence>
<proteinExistence type="inferred from homology"/>
<accession>O69443</accession>
<accession>A0A1R3XWU1</accession>
<accession>Q7U106</accession>
<accession>X2BG74</accession>
<evidence type="ECO:0000250" key="1"/>
<evidence type="ECO:0000255" key="2"/>
<evidence type="ECO:0000256" key="3">
    <source>
        <dbReference type="SAM" id="MobiDB-lite"/>
    </source>
</evidence>
<evidence type="ECO:0000305" key="4"/>
<organism>
    <name type="scientific">Mycobacterium bovis (strain ATCC BAA-935 / AF2122/97)</name>
    <dbReference type="NCBI Taxonomy" id="233413"/>
    <lineage>
        <taxon>Bacteria</taxon>
        <taxon>Bacillati</taxon>
        <taxon>Actinomycetota</taxon>
        <taxon>Actinomycetes</taxon>
        <taxon>Mycobacteriales</taxon>
        <taxon>Mycobacteriaceae</taxon>
        <taxon>Mycobacterium</taxon>
        <taxon>Mycobacterium tuberculosis complex</taxon>
    </lineage>
</organism>